<geneLocation type="mitochondrion"/>
<accession>O79426</accession>
<name>CYB_NEOMO</name>
<keyword id="KW-0249">Electron transport</keyword>
<keyword id="KW-0349">Heme</keyword>
<keyword id="KW-0408">Iron</keyword>
<keyword id="KW-0472">Membrane</keyword>
<keyword id="KW-0479">Metal-binding</keyword>
<keyword id="KW-0496">Mitochondrion</keyword>
<keyword id="KW-0999">Mitochondrion inner membrane</keyword>
<keyword id="KW-0679">Respiratory chain</keyword>
<keyword id="KW-0812">Transmembrane</keyword>
<keyword id="KW-1133">Transmembrane helix</keyword>
<keyword id="KW-0813">Transport</keyword>
<keyword id="KW-0830">Ubiquinone</keyword>
<proteinExistence type="inferred from homology"/>
<dbReference type="EMBL" id="AJ222683">
    <property type="protein sequence ID" value="CAA10938.1"/>
    <property type="molecule type" value="Genomic_DNA"/>
</dbReference>
<dbReference type="SMR" id="O79426"/>
<dbReference type="GO" id="GO:0005743">
    <property type="term" value="C:mitochondrial inner membrane"/>
    <property type="evidence" value="ECO:0007669"/>
    <property type="project" value="UniProtKB-SubCell"/>
</dbReference>
<dbReference type="GO" id="GO:0045275">
    <property type="term" value="C:respiratory chain complex III"/>
    <property type="evidence" value="ECO:0007669"/>
    <property type="project" value="InterPro"/>
</dbReference>
<dbReference type="GO" id="GO:0046872">
    <property type="term" value="F:metal ion binding"/>
    <property type="evidence" value="ECO:0007669"/>
    <property type="project" value="UniProtKB-KW"/>
</dbReference>
<dbReference type="GO" id="GO:0008121">
    <property type="term" value="F:ubiquinol-cytochrome-c reductase activity"/>
    <property type="evidence" value="ECO:0007669"/>
    <property type="project" value="InterPro"/>
</dbReference>
<dbReference type="GO" id="GO:0006122">
    <property type="term" value="P:mitochondrial electron transport, ubiquinol to cytochrome c"/>
    <property type="evidence" value="ECO:0007669"/>
    <property type="project" value="TreeGrafter"/>
</dbReference>
<dbReference type="CDD" id="cd00290">
    <property type="entry name" value="cytochrome_b_C"/>
    <property type="match status" value="1"/>
</dbReference>
<dbReference type="CDD" id="cd00284">
    <property type="entry name" value="Cytochrome_b_N"/>
    <property type="match status" value="1"/>
</dbReference>
<dbReference type="FunFam" id="1.20.810.10:FF:000002">
    <property type="entry name" value="Cytochrome b"/>
    <property type="match status" value="1"/>
</dbReference>
<dbReference type="Gene3D" id="1.20.810.10">
    <property type="entry name" value="Cytochrome Bc1 Complex, Chain C"/>
    <property type="match status" value="1"/>
</dbReference>
<dbReference type="InterPro" id="IPR005798">
    <property type="entry name" value="Cyt_b/b6_C"/>
</dbReference>
<dbReference type="InterPro" id="IPR036150">
    <property type="entry name" value="Cyt_b/b6_C_sf"/>
</dbReference>
<dbReference type="InterPro" id="IPR005797">
    <property type="entry name" value="Cyt_b/b6_N"/>
</dbReference>
<dbReference type="InterPro" id="IPR027387">
    <property type="entry name" value="Cytb/b6-like_sf"/>
</dbReference>
<dbReference type="InterPro" id="IPR030689">
    <property type="entry name" value="Cytochrome_b"/>
</dbReference>
<dbReference type="InterPro" id="IPR048260">
    <property type="entry name" value="Cytochrome_b_C_euk/bac"/>
</dbReference>
<dbReference type="InterPro" id="IPR048259">
    <property type="entry name" value="Cytochrome_b_N_euk/bac"/>
</dbReference>
<dbReference type="InterPro" id="IPR016174">
    <property type="entry name" value="Di-haem_cyt_TM"/>
</dbReference>
<dbReference type="PANTHER" id="PTHR19271">
    <property type="entry name" value="CYTOCHROME B"/>
    <property type="match status" value="1"/>
</dbReference>
<dbReference type="PANTHER" id="PTHR19271:SF16">
    <property type="entry name" value="CYTOCHROME B"/>
    <property type="match status" value="1"/>
</dbReference>
<dbReference type="Pfam" id="PF00032">
    <property type="entry name" value="Cytochrom_B_C"/>
    <property type="match status" value="1"/>
</dbReference>
<dbReference type="Pfam" id="PF00033">
    <property type="entry name" value="Cytochrome_B"/>
    <property type="match status" value="1"/>
</dbReference>
<dbReference type="PIRSF" id="PIRSF038885">
    <property type="entry name" value="COB"/>
    <property type="match status" value="1"/>
</dbReference>
<dbReference type="SUPFAM" id="SSF81648">
    <property type="entry name" value="a domain/subunit of cytochrome bc1 complex (Ubiquinol-cytochrome c reductase)"/>
    <property type="match status" value="1"/>
</dbReference>
<dbReference type="SUPFAM" id="SSF81342">
    <property type="entry name" value="Transmembrane di-heme cytochromes"/>
    <property type="match status" value="1"/>
</dbReference>
<dbReference type="PROSITE" id="PS51003">
    <property type="entry name" value="CYTB_CTER"/>
    <property type="match status" value="1"/>
</dbReference>
<dbReference type="PROSITE" id="PS51002">
    <property type="entry name" value="CYTB_NTER"/>
    <property type="match status" value="1"/>
</dbReference>
<sequence>MTNIRKSHPLMKIVNNAFIDLPAPSNISSWWNFGSLLGICLILQILTGLFLAMHYTSDTMTAFSSVTHICRDVNYGWIIRYMHANGASMFFICLFMHVGRGLYYGSYTFLETWNIGVILLFVTMATAFMGYVLPWGQMSFWGATVITNLLSAIPYIGTNLVEWIWGGFSVDKATLTRFFAFHFILPFIIAALAMVHLLFLHETGSNNPTGISSDADKIPFHPYYTIKDILGAILLILVLTLLVLFAPDLLGDPDNYTPANPLNTPPHIKPEWYFLFAYAILRSIPNKLGGVLALILSILILILMPMLHTSKQRSMMFRPISQCLFWVLVADLLTLTWIGGQPVEHPYIIIGQLASIMYFLLILVLMPVAGSIENNLLKW</sequence>
<organism>
    <name type="scientific">Neotragus moschatus</name>
    <name type="common">Suni</name>
    <dbReference type="NCBI Taxonomy" id="66442"/>
    <lineage>
        <taxon>Eukaryota</taxon>
        <taxon>Metazoa</taxon>
        <taxon>Chordata</taxon>
        <taxon>Craniata</taxon>
        <taxon>Vertebrata</taxon>
        <taxon>Euteleostomi</taxon>
        <taxon>Mammalia</taxon>
        <taxon>Eutheria</taxon>
        <taxon>Laurasiatheria</taxon>
        <taxon>Artiodactyla</taxon>
        <taxon>Ruminantia</taxon>
        <taxon>Pecora</taxon>
        <taxon>Bovidae</taxon>
        <taxon>Antilopinae</taxon>
        <taxon>Neotragus</taxon>
    </lineage>
</organism>
<protein>
    <recommendedName>
        <fullName>Cytochrome b</fullName>
    </recommendedName>
    <alternativeName>
        <fullName>Complex III subunit 3</fullName>
    </alternativeName>
    <alternativeName>
        <fullName>Complex III subunit III</fullName>
    </alternativeName>
    <alternativeName>
        <fullName>Cytochrome b-c1 complex subunit 3</fullName>
    </alternativeName>
    <alternativeName>
        <fullName>Ubiquinol-cytochrome-c reductase complex cytochrome b subunit</fullName>
    </alternativeName>
</protein>
<gene>
    <name type="primary">MT-CYB</name>
    <name type="synonym">COB</name>
    <name type="synonym">CYTB</name>
    <name type="synonym">MTCYB</name>
</gene>
<evidence type="ECO:0000250" key="1"/>
<evidence type="ECO:0000250" key="2">
    <source>
        <dbReference type="UniProtKB" id="P00157"/>
    </source>
</evidence>
<evidence type="ECO:0000255" key="3">
    <source>
        <dbReference type="PROSITE-ProRule" id="PRU00967"/>
    </source>
</evidence>
<evidence type="ECO:0000255" key="4">
    <source>
        <dbReference type="PROSITE-ProRule" id="PRU00968"/>
    </source>
</evidence>
<feature type="chain" id="PRO_0000061271" description="Cytochrome b">
    <location>
        <begin position="1"/>
        <end position="379"/>
    </location>
</feature>
<feature type="transmembrane region" description="Helical" evidence="2">
    <location>
        <begin position="33"/>
        <end position="53"/>
    </location>
</feature>
<feature type="transmembrane region" description="Helical" evidence="2">
    <location>
        <begin position="77"/>
        <end position="98"/>
    </location>
</feature>
<feature type="transmembrane region" description="Helical" evidence="2">
    <location>
        <begin position="113"/>
        <end position="133"/>
    </location>
</feature>
<feature type="transmembrane region" description="Helical" evidence="2">
    <location>
        <begin position="178"/>
        <end position="198"/>
    </location>
</feature>
<feature type="transmembrane region" description="Helical" evidence="2">
    <location>
        <begin position="226"/>
        <end position="246"/>
    </location>
</feature>
<feature type="transmembrane region" description="Helical" evidence="2">
    <location>
        <begin position="288"/>
        <end position="308"/>
    </location>
</feature>
<feature type="transmembrane region" description="Helical" evidence="2">
    <location>
        <begin position="320"/>
        <end position="340"/>
    </location>
</feature>
<feature type="transmembrane region" description="Helical" evidence="2">
    <location>
        <begin position="347"/>
        <end position="367"/>
    </location>
</feature>
<feature type="binding site" description="axial binding residue" evidence="2">
    <location>
        <position position="83"/>
    </location>
    <ligand>
        <name>heme b</name>
        <dbReference type="ChEBI" id="CHEBI:60344"/>
        <label>b562</label>
    </ligand>
    <ligandPart>
        <name>Fe</name>
        <dbReference type="ChEBI" id="CHEBI:18248"/>
    </ligandPart>
</feature>
<feature type="binding site" description="axial binding residue" evidence="2">
    <location>
        <position position="97"/>
    </location>
    <ligand>
        <name>heme b</name>
        <dbReference type="ChEBI" id="CHEBI:60344"/>
        <label>b566</label>
    </ligand>
    <ligandPart>
        <name>Fe</name>
        <dbReference type="ChEBI" id="CHEBI:18248"/>
    </ligandPart>
</feature>
<feature type="binding site" description="axial binding residue" evidence="2">
    <location>
        <position position="182"/>
    </location>
    <ligand>
        <name>heme b</name>
        <dbReference type="ChEBI" id="CHEBI:60344"/>
        <label>b562</label>
    </ligand>
    <ligandPart>
        <name>Fe</name>
        <dbReference type="ChEBI" id="CHEBI:18248"/>
    </ligandPart>
</feature>
<feature type="binding site" description="axial binding residue" evidence="2">
    <location>
        <position position="196"/>
    </location>
    <ligand>
        <name>heme b</name>
        <dbReference type="ChEBI" id="CHEBI:60344"/>
        <label>b566</label>
    </ligand>
    <ligandPart>
        <name>Fe</name>
        <dbReference type="ChEBI" id="CHEBI:18248"/>
    </ligandPart>
</feature>
<feature type="binding site" evidence="2">
    <location>
        <position position="201"/>
    </location>
    <ligand>
        <name>a ubiquinone</name>
        <dbReference type="ChEBI" id="CHEBI:16389"/>
    </ligand>
</feature>
<comment type="function">
    <text evidence="2">Component of the ubiquinol-cytochrome c reductase complex (complex III or cytochrome b-c1 complex) that is part of the mitochondrial respiratory chain. The b-c1 complex mediates electron transfer from ubiquinol to cytochrome c. Contributes to the generation of a proton gradient across the mitochondrial membrane that is then used for ATP synthesis.</text>
</comment>
<comment type="cofactor">
    <cofactor evidence="2">
        <name>heme b</name>
        <dbReference type="ChEBI" id="CHEBI:60344"/>
    </cofactor>
    <text evidence="2">Binds 2 heme b groups non-covalently.</text>
</comment>
<comment type="subunit">
    <text evidence="2">The cytochrome bc1 complex contains 11 subunits: 3 respiratory subunits (MT-CYB, CYC1 and UQCRFS1), 2 core proteins (UQCRC1 and UQCRC2) and 6 low-molecular weight proteins (UQCRH/QCR6, UQCRB/QCR7, UQCRQ/QCR8, UQCR10/QCR9, UQCR11/QCR10 and a cleavage product of UQCRFS1). This cytochrome bc1 complex then forms a dimer.</text>
</comment>
<comment type="subcellular location">
    <subcellularLocation>
        <location evidence="2">Mitochondrion inner membrane</location>
        <topology evidence="2">Multi-pass membrane protein</topology>
    </subcellularLocation>
</comment>
<comment type="miscellaneous">
    <text evidence="1">Heme 1 (or BL or b562) is low-potential and absorbs at about 562 nm, and heme 2 (or BH or b566) is high-potential and absorbs at about 566 nm.</text>
</comment>
<comment type="similarity">
    <text evidence="3 4">Belongs to the cytochrome b family.</text>
</comment>
<comment type="caution">
    <text evidence="2">The full-length protein contains only eight transmembrane helices, not nine as predicted by bioinformatics tools.</text>
</comment>
<reference key="1">
    <citation type="journal article" date="1999" name="Mol. Phylogenet. Evol.">
        <title>The tribal radiation of the family Bovidae (Artiodactyla) and the evolution of the mitochondrial cytochrome b gene.</title>
        <authorList>
            <person name="Hassanin A."/>
            <person name="Douzery E.J.P."/>
        </authorList>
    </citation>
    <scope>NUCLEOTIDE SEQUENCE [GENOMIC DNA]</scope>
</reference>